<sequence>MVLQNDIDLLNPPAELEKLKHKKKRLVQSPNSFFMDVKCQGCFNITTVFSHSQTVVVCPGCQTVLCQPTGGKARLTEGCSFRRKGD</sequence>
<organism>
    <name type="scientific">Hordeum vulgare</name>
    <name type="common">Barley</name>
    <dbReference type="NCBI Taxonomy" id="4513"/>
    <lineage>
        <taxon>Eukaryota</taxon>
        <taxon>Viridiplantae</taxon>
        <taxon>Streptophyta</taxon>
        <taxon>Embryophyta</taxon>
        <taxon>Tracheophyta</taxon>
        <taxon>Spermatophyta</taxon>
        <taxon>Magnoliopsida</taxon>
        <taxon>Liliopsida</taxon>
        <taxon>Poales</taxon>
        <taxon>Poaceae</taxon>
        <taxon>BOP clade</taxon>
        <taxon>Pooideae</taxon>
        <taxon>Triticodae</taxon>
        <taxon>Triticeae</taxon>
        <taxon>Hordeinae</taxon>
        <taxon>Hordeum</taxon>
    </lineage>
</organism>
<name>RS27_HORVU</name>
<proteinExistence type="inferred from homology"/>
<gene>
    <name type="primary">RPS27</name>
    <name type="synonym">MNE-1</name>
</gene>
<evidence type="ECO:0000255" key="1"/>
<evidence type="ECO:0000305" key="2"/>
<reference key="1">
    <citation type="submission" date="2001-05" db="EMBL/GenBank/DDBJ databases">
        <title>Molecular and expression analysis of the ribosomal protein S27 gene family in barley.</title>
        <authorList>
            <person name="Huang C."/>
            <person name="Barker S.J."/>
            <person name="Langridge P."/>
            <person name="Graham R.D."/>
        </authorList>
    </citation>
    <scope>NUCLEOTIDE SEQUENCE</scope>
    <source>
        <strain>cv. Galleon</strain>
        <strain>cv. Weeah</strain>
        <tissue>Root</tissue>
    </source>
</reference>
<feature type="chain" id="PRO_0000149063" description="Small ribosomal subunit protein eS27">
    <location>
        <begin position="1"/>
        <end position="86"/>
    </location>
</feature>
<feature type="zinc finger region" description="C4-type" evidence="1">
    <location>
        <begin position="39"/>
        <end position="61"/>
    </location>
</feature>
<comment type="cofactor">
    <cofactor evidence="2">
        <name>Zn(2+)</name>
        <dbReference type="ChEBI" id="CHEBI:29105"/>
    </cofactor>
    <text evidence="2">Binds 1 zinc ion per subunit.</text>
</comment>
<comment type="similarity">
    <text evidence="2">Belongs to the eukaryotic ribosomal protein eS27 family.</text>
</comment>
<keyword id="KW-0479">Metal-binding</keyword>
<keyword id="KW-0687">Ribonucleoprotein</keyword>
<keyword id="KW-0689">Ribosomal protein</keyword>
<keyword id="KW-0862">Zinc</keyword>
<keyword id="KW-0863">Zinc-finger</keyword>
<accession>Q96564</accession>
<accession>Q93VA7</accession>
<dbReference type="EMBL" id="X85544">
    <property type="protein sequence ID" value="CAA59732.2"/>
    <property type="molecule type" value="mRNA"/>
</dbReference>
<dbReference type="EMBL" id="AJ314570">
    <property type="protein sequence ID" value="CAC42134.1"/>
    <property type="molecule type" value="Genomic_DNA"/>
</dbReference>
<dbReference type="EMBL" id="AJ314594">
    <property type="protein sequence ID" value="CAC42162.1"/>
    <property type="molecule type" value="mRNA"/>
</dbReference>
<dbReference type="EMBL" id="AJ314595">
    <property type="protein sequence ID" value="CAC42163.1"/>
    <property type="molecule type" value="mRNA"/>
</dbReference>
<dbReference type="PIR" id="S53124">
    <property type="entry name" value="S53124"/>
</dbReference>
<dbReference type="SMR" id="Q96564"/>
<dbReference type="OMA" id="CASILCQ"/>
<dbReference type="ExpressionAtlas" id="Q96564">
    <property type="expression patterns" value="baseline and differential"/>
</dbReference>
<dbReference type="GO" id="GO:1990904">
    <property type="term" value="C:ribonucleoprotein complex"/>
    <property type="evidence" value="ECO:0007669"/>
    <property type="project" value="UniProtKB-KW"/>
</dbReference>
<dbReference type="GO" id="GO:0005840">
    <property type="term" value="C:ribosome"/>
    <property type="evidence" value="ECO:0007669"/>
    <property type="project" value="UniProtKB-KW"/>
</dbReference>
<dbReference type="GO" id="GO:0003735">
    <property type="term" value="F:structural constituent of ribosome"/>
    <property type="evidence" value="ECO:0007669"/>
    <property type="project" value="InterPro"/>
</dbReference>
<dbReference type="GO" id="GO:0008270">
    <property type="term" value="F:zinc ion binding"/>
    <property type="evidence" value="ECO:0007669"/>
    <property type="project" value="UniProtKB-KW"/>
</dbReference>
<dbReference type="GO" id="GO:0006412">
    <property type="term" value="P:translation"/>
    <property type="evidence" value="ECO:0007669"/>
    <property type="project" value="InterPro"/>
</dbReference>
<dbReference type="FunFam" id="2.20.25.100:FF:000001">
    <property type="entry name" value="40S ribosomal protein S27"/>
    <property type="match status" value="1"/>
</dbReference>
<dbReference type="Gene3D" id="2.20.25.100">
    <property type="entry name" value="Zn-binding ribosomal proteins"/>
    <property type="match status" value="1"/>
</dbReference>
<dbReference type="HAMAP" id="MF_00371">
    <property type="entry name" value="Ribosomal_eS27"/>
    <property type="match status" value="1"/>
</dbReference>
<dbReference type="InterPro" id="IPR000592">
    <property type="entry name" value="Ribosomal_eS27"/>
</dbReference>
<dbReference type="InterPro" id="IPR023407">
    <property type="entry name" value="Ribosomal_eS27_Zn-bd_dom_sf"/>
</dbReference>
<dbReference type="InterPro" id="IPR011332">
    <property type="entry name" value="Ribosomal_zn-bd"/>
</dbReference>
<dbReference type="PANTHER" id="PTHR11594">
    <property type="entry name" value="40S RIBOSOMAL PROTEIN S27"/>
    <property type="match status" value="1"/>
</dbReference>
<dbReference type="Pfam" id="PF01667">
    <property type="entry name" value="Ribosomal_S27e"/>
    <property type="match status" value="1"/>
</dbReference>
<dbReference type="SUPFAM" id="SSF57829">
    <property type="entry name" value="Zn-binding ribosomal proteins"/>
    <property type="match status" value="1"/>
</dbReference>
<dbReference type="PROSITE" id="PS01168">
    <property type="entry name" value="RIBOSOMAL_S27E"/>
    <property type="match status" value="1"/>
</dbReference>
<protein>
    <recommendedName>
        <fullName evidence="2">Small ribosomal subunit protein eS27</fullName>
    </recommendedName>
    <alternativeName>
        <fullName>40S ribosomal protein S27</fullName>
    </alternativeName>
    <alternativeName>
        <fullName>Manganese efficiency-related protein 1</fullName>
    </alternativeName>
</protein>